<sequence length="163" mass="18135">MSNINLATLDISEHPNLPTSSAVLFKAKDDKKLSFEKIASHVGRNEVATAAIFYGQAKASAEDIVRLAEVLGIDHGQLAFLLGGFPDRGKSVPFPPKDPLIYRLYEIVQNYGYAYKAVMNEKFGDGIMSAISFSTKVEKETDKDGNDWAVVTWRGKWLPYSRF</sequence>
<comment type="function">
    <text evidence="1">Catalyzes the reaction of cyanate with bicarbonate to produce ammonia and carbon dioxide.</text>
</comment>
<comment type="catalytic activity">
    <reaction evidence="1">
        <text>cyanate + hydrogencarbonate + 3 H(+) = NH4(+) + 2 CO2</text>
        <dbReference type="Rhea" id="RHEA:11120"/>
        <dbReference type="ChEBI" id="CHEBI:15378"/>
        <dbReference type="ChEBI" id="CHEBI:16526"/>
        <dbReference type="ChEBI" id="CHEBI:17544"/>
        <dbReference type="ChEBI" id="CHEBI:28938"/>
        <dbReference type="ChEBI" id="CHEBI:29195"/>
        <dbReference type="EC" id="4.2.1.104"/>
    </reaction>
</comment>
<comment type="similarity">
    <text evidence="1">Belongs to the cyanase family.</text>
</comment>
<feature type="chain" id="PRO_0000403235" description="Cyanate hydratase">
    <location>
        <begin position="1"/>
        <end position="163"/>
    </location>
</feature>
<feature type="active site" evidence="1">
    <location>
        <position position="103"/>
    </location>
</feature>
<feature type="active site" evidence="1">
    <location>
        <position position="106"/>
    </location>
</feature>
<feature type="active site" evidence="1">
    <location>
        <position position="129"/>
    </location>
</feature>
<reference key="1">
    <citation type="submission" date="2009-05" db="EMBL/GenBank/DDBJ databases">
        <title>The genome sequence of Ajellomyces capsulatus strain H143.</title>
        <authorList>
            <person name="Champion M."/>
            <person name="Cuomo C.A."/>
            <person name="Ma L.-J."/>
            <person name="Henn M.R."/>
            <person name="Sil A."/>
            <person name="Goldman B."/>
            <person name="Young S.K."/>
            <person name="Kodira C.D."/>
            <person name="Zeng Q."/>
            <person name="Koehrsen M."/>
            <person name="Alvarado L."/>
            <person name="Berlin A.M."/>
            <person name="Borenstein D."/>
            <person name="Chen Z."/>
            <person name="Engels R."/>
            <person name="Freedman E."/>
            <person name="Gellesch M."/>
            <person name="Goldberg J."/>
            <person name="Griggs A."/>
            <person name="Gujja S."/>
            <person name="Heiman D.I."/>
            <person name="Hepburn T.A."/>
            <person name="Howarth C."/>
            <person name="Jen D."/>
            <person name="Larson L."/>
            <person name="Lewis B."/>
            <person name="Mehta T."/>
            <person name="Park D."/>
            <person name="Pearson M."/>
            <person name="Roberts A."/>
            <person name="Saif S."/>
            <person name="Shea T.D."/>
            <person name="Shenoy N."/>
            <person name="Sisk P."/>
            <person name="Stolte C."/>
            <person name="Sykes S."/>
            <person name="Walk T."/>
            <person name="White J."/>
            <person name="Yandava C."/>
            <person name="Klein B."/>
            <person name="McEwen J.G."/>
            <person name="Puccia R."/>
            <person name="Goldman G.H."/>
            <person name="Felipe M.S."/>
            <person name="Nino-Vega G."/>
            <person name="San-Blas G."/>
            <person name="Taylor J.W."/>
            <person name="Mendoza L."/>
            <person name="Galagan J.E."/>
            <person name="Nusbaum C."/>
            <person name="Birren B.W."/>
        </authorList>
    </citation>
    <scope>NUCLEOTIDE SEQUENCE [LARGE SCALE GENOMIC DNA]</scope>
    <source>
        <strain>H143</strain>
    </source>
</reference>
<accession>C6HBW5</accession>
<keyword id="KW-0456">Lyase</keyword>
<keyword id="KW-1185">Reference proteome</keyword>
<organism>
    <name type="scientific">Ajellomyces capsulatus (strain H143)</name>
    <name type="common">Darling's disease fungus</name>
    <name type="synonym">Histoplasma capsulatum</name>
    <dbReference type="NCBI Taxonomy" id="544712"/>
    <lineage>
        <taxon>Eukaryota</taxon>
        <taxon>Fungi</taxon>
        <taxon>Dikarya</taxon>
        <taxon>Ascomycota</taxon>
        <taxon>Pezizomycotina</taxon>
        <taxon>Eurotiomycetes</taxon>
        <taxon>Eurotiomycetidae</taxon>
        <taxon>Onygenales</taxon>
        <taxon>Ajellomycetaceae</taxon>
        <taxon>Histoplasma</taxon>
    </lineage>
</organism>
<proteinExistence type="inferred from homology"/>
<evidence type="ECO:0000255" key="1">
    <source>
        <dbReference type="HAMAP-Rule" id="MF_03139"/>
    </source>
</evidence>
<dbReference type="EC" id="4.2.1.104" evidence="1"/>
<dbReference type="EMBL" id="GG692422">
    <property type="protein sequence ID" value="EER42055.1"/>
    <property type="molecule type" value="Genomic_DNA"/>
</dbReference>
<dbReference type="SMR" id="C6HBW5"/>
<dbReference type="STRING" id="544712.C6HBW5"/>
<dbReference type="VEuPathDB" id="FungiDB:HCDG_03514"/>
<dbReference type="eggNOG" id="ENOG502RY7W">
    <property type="taxonomic scope" value="Eukaryota"/>
</dbReference>
<dbReference type="HOGENOM" id="CLU_103452_0_0_1"/>
<dbReference type="OMA" id="YELVMIN"/>
<dbReference type="OrthoDB" id="1717at299071"/>
<dbReference type="Proteomes" id="UP000002624">
    <property type="component" value="Unassembled WGS sequence"/>
</dbReference>
<dbReference type="GO" id="GO:0008824">
    <property type="term" value="F:cyanate hydratase activity"/>
    <property type="evidence" value="ECO:0007669"/>
    <property type="project" value="UniProtKB-UniRule"/>
</dbReference>
<dbReference type="GO" id="GO:0003677">
    <property type="term" value="F:DNA binding"/>
    <property type="evidence" value="ECO:0007669"/>
    <property type="project" value="InterPro"/>
</dbReference>
<dbReference type="GO" id="GO:0009439">
    <property type="term" value="P:cyanate metabolic process"/>
    <property type="evidence" value="ECO:0007669"/>
    <property type="project" value="UniProtKB-UniRule"/>
</dbReference>
<dbReference type="CDD" id="cd00559">
    <property type="entry name" value="Cyanase_C"/>
    <property type="match status" value="1"/>
</dbReference>
<dbReference type="CDD" id="cd00093">
    <property type="entry name" value="HTH_XRE"/>
    <property type="match status" value="1"/>
</dbReference>
<dbReference type="Gene3D" id="3.30.1160.10">
    <property type="entry name" value="Cyanate lyase, C-terminal domain"/>
    <property type="match status" value="1"/>
</dbReference>
<dbReference type="Gene3D" id="1.10.260.40">
    <property type="entry name" value="lambda repressor-like DNA-binding domains"/>
    <property type="match status" value="1"/>
</dbReference>
<dbReference type="HAMAP" id="MF_00535">
    <property type="entry name" value="Cyanate_hydrat"/>
    <property type="match status" value="1"/>
</dbReference>
<dbReference type="InterPro" id="IPR001387">
    <property type="entry name" value="Cro/C1-type_HTH"/>
</dbReference>
<dbReference type="InterPro" id="IPR008076">
    <property type="entry name" value="Cyanase"/>
</dbReference>
<dbReference type="InterPro" id="IPR003712">
    <property type="entry name" value="Cyanate_lyase_C"/>
</dbReference>
<dbReference type="InterPro" id="IPR036581">
    <property type="entry name" value="Cyanate_lyase_C_sf"/>
</dbReference>
<dbReference type="InterPro" id="IPR010982">
    <property type="entry name" value="Lambda_DNA-bd_dom_sf"/>
</dbReference>
<dbReference type="NCBIfam" id="TIGR00673">
    <property type="entry name" value="cynS"/>
    <property type="match status" value="1"/>
</dbReference>
<dbReference type="PANTHER" id="PTHR34186">
    <property type="entry name" value="CYANATE HYDRATASE"/>
    <property type="match status" value="1"/>
</dbReference>
<dbReference type="PANTHER" id="PTHR34186:SF2">
    <property type="entry name" value="CYANATE HYDRATASE"/>
    <property type="match status" value="1"/>
</dbReference>
<dbReference type="Pfam" id="PF02560">
    <property type="entry name" value="Cyanate_lyase"/>
    <property type="match status" value="1"/>
</dbReference>
<dbReference type="PIRSF" id="PIRSF001263">
    <property type="entry name" value="Cyanate_hydratas"/>
    <property type="match status" value="1"/>
</dbReference>
<dbReference type="PRINTS" id="PR01693">
    <property type="entry name" value="CYANASE"/>
</dbReference>
<dbReference type="SMART" id="SM01116">
    <property type="entry name" value="Cyanate_lyase"/>
    <property type="match status" value="1"/>
</dbReference>
<dbReference type="SUPFAM" id="SSF55234">
    <property type="entry name" value="Cyanase C-terminal domain"/>
    <property type="match status" value="1"/>
</dbReference>
<dbReference type="SUPFAM" id="SSF47413">
    <property type="entry name" value="lambda repressor-like DNA-binding domains"/>
    <property type="match status" value="1"/>
</dbReference>
<protein>
    <recommendedName>
        <fullName evidence="1">Cyanate hydratase</fullName>
        <shortName evidence="1">Cyanase</shortName>
        <ecNumber evidence="1">4.2.1.104</ecNumber>
    </recommendedName>
    <alternativeName>
        <fullName evidence="1">Cyanate hydrolase</fullName>
    </alternativeName>
    <alternativeName>
        <fullName evidence="1">Cyanate lyase</fullName>
    </alternativeName>
</protein>
<name>CYNS_AJECH</name>
<gene>
    <name evidence="1" type="primary">CYN1</name>
    <name type="ORF">HCDG_03514</name>
</gene>